<feature type="chain" id="PRO_0000150631" description="Olfactory receptor 6K6">
    <location>
        <begin position="1"/>
        <end position="343"/>
    </location>
</feature>
<feature type="topological domain" description="Extracellular" evidence="1">
    <location>
        <begin position="1"/>
        <end position="53"/>
    </location>
</feature>
<feature type="transmembrane region" description="Helical; Name=1" evidence="1">
    <location>
        <begin position="54"/>
        <end position="74"/>
    </location>
</feature>
<feature type="topological domain" description="Cytoplasmic" evidence="1">
    <location>
        <begin position="75"/>
        <end position="82"/>
    </location>
</feature>
<feature type="transmembrane region" description="Helical; Name=2" evidence="1">
    <location>
        <begin position="83"/>
        <end position="103"/>
    </location>
</feature>
<feature type="topological domain" description="Extracellular" evidence="1">
    <location>
        <begin position="104"/>
        <end position="127"/>
    </location>
</feature>
<feature type="transmembrane region" description="Helical; Name=3" evidence="1">
    <location>
        <begin position="128"/>
        <end position="148"/>
    </location>
</feature>
<feature type="topological domain" description="Cytoplasmic" evidence="1">
    <location>
        <begin position="149"/>
        <end position="167"/>
    </location>
</feature>
<feature type="transmembrane region" description="Helical; Name=4" evidence="1">
    <location>
        <begin position="168"/>
        <end position="188"/>
    </location>
</feature>
<feature type="topological domain" description="Extracellular" evidence="1">
    <location>
        <begin position="189"/>
        <end position="224"/>
    </location>
</feature>
<feature type="transmembrane region" description="Helical; Name=5" evidence="1">
    <location>
        <begin position="225"/>
        <end position="244"/>
    </location>
</feature>
<feature type="topological domain" description="Cytoplasmic" evidence="1">
    <location>
        <begin position="245"/>
        <end position="264"/>
    </location>
</feature>
<feature type="transmembrane region" description="Helical; Name=6" evidence="1">
    <location>
        <begin position="265"/>
        <end position="285"/>
    </location>
</feature>
<feature type="topological domain" description="Extracellular" evidence="1">
    <location>
        <begin position="286"/>
        <end position="298"/>
    </location>
</feature>
<feature type="transmembrane region" description="Helical; Name=7" evidence="1">
    <location>
        <begin position="299"/>
        <end position="319"/>
    </location>
</feature>
<feature type="topological domain" description="Cytoplasmic" evidence="1">
    <location>
        <begin position="320"/>
        <end position="343"/>
    </location>
</feature>
<feature type="glycosylation site" description="N-linked (GlcNAc...) asparagine" evidence="1">
    <location>
        <position position="33"/>
    </location>
</feature>
<feature type="disulfide bond" evidence="2">
    <location>
        <begin position="125"/>
        <end position="217"/>
    </location>
</feature>
<feature type="sequence variant" id="VAR_057551" description="In dbSNP:rs16840974.">
    <original>E</original>
    <variation>D</variation>
    <location>
        <position position="39"/>
    </location>
</feature>
<feature type="sequence variant" id="VAR_057552" description="In dbSNP:rs16840976.">
    <original>H</original>
    <variation>Y</variation>
    <location>
        <position position="49"/>
    </location>
</feature>
<feature type="sequence variant" id="VAR_057553" description="In dbSNP:rs16840980.">
    <original>G</original>
    <variation>D</variation>
    <location>
        <position position="80"/>
    </location>
</feature>
<feature type="sequence variant" id="VAR_057554" description="In dbSNP:rs16840991.">
    <original>S</original>
    <variation>L</variation>
    <location>
        <position position="134"/>
    </location>
</feature>
<feature type="sequence variant" id="VAR_057555" description="In dbSNP:rs16841001.">
    <original>R</original>
    <variation>C</variation>
    <location>
        <position position="159"/>
    </location>
</feature>
<feature type="sequence variant" id="VAR_057556" description="In dbSNP:rs16841009.">
    <original>C</original>
    <variation>R</variation>
    <location>
        <position position="197"/>
    </location>
</feature>
<feature type="sequence variant" id="VAR_057557" description="In dbSNP:rs16841017.">
    <original>P</original>
    <variation>L</variation>
    <location>
        <position position="211"/>
    </location>
</feature>
<feature type="sequence variant" id="VAR_057558" description="In dbSNP:rs16841038.">
    <original>R</original>
    <variation>Q</variation>
    <location>
        <position position="247"/>
    </location>
</feature>
<feature type="sequence variant" id="VAR_057559" description="In dbSNP:rs16841042.">
    <original>H</original>
    <variation>R</variation>
    <location>
        <position position="261"/>
    </location>
</feature>
<feature type="sequence variant" id="VAR_057560" description="In dbSNP:rs16841045.">
    <original>K</original>
    <variation>R</variation>
    <location>
        <position position="320"/>
    </location>
</feature>
<proteinExistence type="evidence at transcript level"/>
<protein>
    <recommendedName>
        <fullName>Olfactory receptor 6K6</fullName>
    </recommendedName>
    <alternativeName>
        <fullName>Olfactory receptor OR1-21</fullName>
    </alternativeName>
</protein>
<dbReference type="EMBL" id="AB065650">
    <property type="protein sequence ID" value="BAC05876.1"/>
    <property type="status" value="ALT_INIT"/>
    <property type="molecule type" value="Genomic_DNA"/>
</dbReference>
<dbReference type="EMBL" id="AL513205">
    <property type="status" value="NOT_ANNOTATED_CDS"/>
    <property type="molecule type" value="Genomic_DNA"/>
</dbReference>
<dbReference type="EMBL" id="BC140743">
    <property type="protein sequence ID" value="AAI40744.1"/>
    <property type="molecule type" value="mRNA"/>
</dbReference>
<dbReference type="EMBL" id="BK004198">
    <property type="protein sequence ID" value="DAA04596.1"/>
    <property type="molecule type" value="Genomic_DNA"/>
</dbReference>
<dbReference type="RefSeq" id="NP_001005184.1">
    <property type="nucleotide sequence ID" value="NM_001005184.1"/>
</dbReference>
<dbReference type="SMR" id="Q8NGW6"/>
<dbReference type="FunCoup" id="Q8NGW6">
    <property type="interactions" value="417"/>
</dbReference>
<dbReference type="STRING" id="9606.ENSP00000357126"/>
<dbReference type="GlyCosmos" id="Q8NGW6">
    <property type="glycosylation" value="1 site, No reported glycans"/>
</dbReference>
<dbReference type="GlyGen" id="Q8NGW6">
    <property type="glycosylation" value="4 sites, 1 O-linked glycan (3 sites)"/>
</dbReference>
<dbReference type="iPTMnet" id="Q8NGW6"/>
<dbReference type="PhosphoSitePlus" id="Q8NGW6"/>
<dbReference type="BioMuta" id="OR6K6"/>
<dbReference type="DMDM" id="223590118"/>
<dbReference type="PaxDb" id="9606-ENSP00000357126"/>
<dbReference type="Antibodypedia" id="68463">
    <property type="antibodies" value="73 antibodies from 17 providers"/>
</dbReference>
<dbReference type="DNASU" id="128371"/>
<dbReference type="GeneID" id="128371"/>
<dbReference type="KEGG" id="hsa:128371"/>
<dbReference type="UCSC" id="uc001fsw.2">
    <property type="organism name" value="human"/>
</dbReference>
<dbReference type="AGR" id="HGNC:15033"/>
<dbReference type="CTD" id="128371"/>
<dbReference type="GeneCards" id="OR6K6"/>
<dbReference type="HGNC" id="HGNC:15033">
    <property type="gene designation" value="OR6K6"/>
</dbReference>
<dbReference type="neXtProt" id="NX_Q8NGW6"/>
<dbReference type="PharmGKB" id="PA32593"/>
<dbReference type="VEuPathDB" id="HostDB:ENSG00000180433"/>
<dbReference type="eggNOG" id="ENOG502T1JP">
    <property type="taxonomic scope" value="Eukaryota"/>
</dbReference>
<dbReference type="HOGENOM" id="CLU_012526_0_1_1"/>
<dbReference type="InParanoid" id="Q8NGW6"/>
<dbReference type="OMA" id="PFLCSQM"/>
<dbReference type="OrthoDB" id="6144223at2759"/>
<dbReference type="PAN-GO" id="Q8NGW6">
    <property type="GO annotations" value="4 GO annotations based on evolutionary models"/>
</dbReference>
<dbReference type="PhylomeDB" id="Q8NGW6"/>
<dbReference type="TreeFam" id="TF337562"/>
<dbReference type="PathwayCommons" id="Q8NGW6"/>
<dbReference type="Reactome" id="R-HSA-9752946">
    <property type="pathway name" value="Expression and translocation of olfactory receptors"/>
</dbReference>
<dbReference type="BioGRID-ORCS" id="128371">
    <property type="hits" value="8 hits in 745 CRISPR screens"/>
</dbReference>
<dbReference type="GeneWiki" id="OR6K6"/>
<dbReference type="GenomeRNAi" id="128371"/>
<dbReference type="Pharos" id="Q8NGW6">
    <property type="development level" value="Tdark"/>
</dbReference>
<dbReference type="PRO" id="PR:Q8NGW6"/>
<dbReference type="Proteomes" id="UP000005640">
    <property type="component" value="Chromosome 1"/>
</dbReference>
<dbReference type="RNAct" id="Q8NGW6">
    <property type="molecule type" value="protein"/>
</dbReference>
<dbReference type="GO" id="GO:0016020">
    <property type="term" value="C:membrane"/>
    <property type="evidence" value="ECO:0000318"/>
    <property type="project" value="GO_Central"/>
</dbReference>
<dbReference type="GO" id="GO:0005886">
    <property type="term" value="C:plasma membrane"/>
    <property type="evidence" value="ECO:0007669"/>
    <property type="project" value="UniProtKB-SubCell"/>
</dbReference>
<dbReference type="GO" id="GO:0004930">
    <property type="term" value="F:G protein-coupled receptor activity"/>
    <property type="evidence" value="ECO:0007669"/>
    <property type="project" value="UniProtKB-KW"/>
</dbReference>
<dbReference type="GO" id="GO:0005549">
    <property type="term" value="F:odorant binding"/>
    <property type="evidence" value="ECO:0000318"/>
    <property type="project" value="GO_Central"/>
</dbReference>
<dbReference type="GO" id="GO:0004984">
    <property type="term" value="F:olfactory receptor activity"/>
    <property type="evidence" value="ECO:0000318"/>
    <property type="project" value="GO_Central"/>
</dbReference>
<dbReference type="GO" id="GO:0050911">
    <property type="term" value="P:detection of chemical stimulus involved in sensory perception of smell"/>
    <property type="evidence" value="ECO:0000318"/>
    <property type="project" value="GO_Central"/>
</dbReference>
<dbReference type="CDD" id="cd15914">
    <property type="entry name" value="7tmA_OR6N-like"/>
    <property type="match status" value="1"/>
</dbReference>
<dbReference type="FunFam" id="1.20.1070.10:FF:000001">
    <property type="entry name" value="Olfactory receptor"/>
    <property type="match status" value="1"/>
</dbReference>
<dbReference type="Gene3D" id="1.20.1070.10">
    <property type="entry name" value="Rhodopsin 7-helix transmembrane proteins"/>
    <property type="match status" value="1"/>
</dbReference>
<dbReference type="InterPro" id="IPR000276">
    <property type="entry name" value="GPCR_Rhodpsn"/>
</dbReference>
<dbReference type="InterPro" id="IPR017452">
    <property type="entry name" value="GPCR_Rhodpsn_7TM"/>
</dbReference>
<dbReference type="InterPro" id="IPR000725">
    <property type="entry name" value="Olfact_rcpt"/>
</dbReference>
<dbReference type="InterPro" id="IPR050939">
    <property type="entry name" value="Olfactory_GPCR1"/>
</dbReference>
<dbReference type="PANTHER" id="PTHR24242">
    <property type="entry name" value="G-PROTEIN COUPLED RECEPTOR"/>
    <property type="match status" value="1"/>
</dbReference>
<dbReference type="PANTHER" id="PTHR24242:SF379">
    <property type="entry name" value="OLFACTORY RECEPTOR"/>
    <property type="match status" value="1"/>
</dbReference>
<dbReference type="Pfam" id="PF13853">
    <property type="entry name" value="7tm_4"/>
    <property type="match status" value="1"/>
</dbReference>
<dbReference type="PRINTS" id="PR00237">
    <property type="entry name" value="GPCRRHODOPSN"/>
</dbReference>
<dbReference type="PRINTS" id="PR00245">
    <property type="entry name" value="OLFACTORYR"/>
</dbReference>
<dbReference type="SUPFAM" id="SSF81321">
    <property type="entry name" value="Family A G protein-coupled receptor-like"/>
    <property type="match status" value="1"/>
</dbReference>
<dbReference type="PROSITE" id="PS00237">
    <property type="entry name" value="G_PROTEIN_RECEP_F1_1"/>
    <property type="match status" value="1"/>
</dbReference>
<dbReference type="PROSITE" id="PS50262">
    <property type="entry name" value="G_PROTEIN_RECEP_F1_2"/>
    <property type="match status" value="1"/>
</dbReference>
<keyword id="KW-1003">Cell membrane</keyword>
<keyword id="KW-1015">Disulfide bond</keyword>
<keyword id="KW-0297">G-protein coupled receptor</keyword>
<keyword id="KW-0325">Glycoprotein</keyword>
<keyword id="KW-0472">Membrane</keyword>
<keyword id="KW-0552">Olfaction</keyword>
<keyword id="KW-0675">Receptor</keyword>
<keyword id="KW-1185">Reference proteome</keyword>
<keyword id="KW-0716">Sensory transduction</keyword>
<keyword id="KW-0807">Transducer</keyword>
<keyword id="KW-0812">Transmembrane</keyword>
<keyword id="KW-1133">Transmembrane helix</keyword>
<reference key="1">
    <citation type="submission" date="2001-07" db="EMBL/GenBank/DDBJ databases">
        <title>Genome-wide discovery and analysis of human seven transmembrane helix receptor genes.</title>
        <authorList>
            <person name="Suwa M."/>
            <person name="Sato T."/>
            <person name="Okouchi I."/>
            <person name="Arita M."/>
            <person name="Futami K."/>
            <person name="Matsumoto S."/>
            <person name="Tsutsumi S."/>
            <person name="Aburatani H."/>
            <person name="Asai K."/>
            <person name="Akiyama Y."/>
        </authorList>
    </citation>
    <scope>NUCLEOTIDE SEQUENCE [GENOMIC DNA]</scope>
</reference>
<reference key="2">
    <citation type="journal article" date="2006" name="Nature">
        <title>The DNA sequence and biological annotation of human chromosome 1.</title>
        <authorList>
            <person name="Gregory S.G."/>
            <person name="Barlow K.F."/>
            <person name="McLay K.E."/>
            <person name="Kaul R."/>
            <person name="Swarbreck D."/>
            <person name="Dunham A."/>
            <person name="Scott C.E."/>
            <person name="Howe K.L."/>
            <person name="Woodfine K."/>
            <person name="Spencer C.C.A."/>
            <person name="Jones M.C."/>
            <person name="Gillson C."/>
            <person name="Searle S."/>
            <person name="Zhou Y."/>
            <person name="Kokocinski F."/>
            <person name="McDonald L."/>
            <person name="Evans R."/>
            <person name="Phillips K."/>
            <person name="Atkinson A."/>
            <person name="Cooper R."/>
            <person name="Jones C."/>
            <person name="Hall R.E."/>
            <person name="Andrews T.D."/>
            <person name="Lloyd C."/>
            <person name="Ainscough R."/>
            <person name="Almeida J.P."/>
            <person name="Ambrose K.D."/>
            <person name="Anderson F."/>
            <person name="Andrew R.W."/>
            <person name="Ashwell R.I.S."/>
            <person name="Aubin K."/>
            <person name="Babbage A.K."/>
            <person name="Bagguley C.L."/>
            <person name="Bailey J."/>
            <person name="Beasley H."/>
            <person name="Bethel G."/>
            <person name="Bird C.P."/>
            <person name="Bray-Allen S."/>
            <person name="Brown J.Y."/>
            <person name="Brown A.J."/>
            <person name="Buckley D."/>
            <person name="Burton J."/>
            <person name="Bye J."/>
            <person name="Carder C."/>
            <person name="Chapman J.C."/>
            <person name="Clark S.Y."/>
            <person name="Clarke G."/>
            <person name="Clee C."/>
            <person name="Cobley V."/>
            <person name="Collier R.E."/>
            <person name="Corby N."/>
            <person name="Coville G.J."/>
            <person name="Davies J."/>
            <person name="Deadman R."/>
            <person name="Dunn M."/>
            <person name="Earthrowl M."/>
            <person name="Ellington A.G."/>
            <person name="Errington H."/>
            <person name="Frankish A."/>
            <person name="Frankland J."/>
            <person name="French L."/>
            <person name="Garner P."/>
            <person name="Garnett J."/>
            <person name="Gay L."/>
            <person name="Ghori M.R.J."/>
            <person name="Gibson R."/>
            <person name="Gilby L.M."/>
            <person name="Gillett W."/>
            <person name="Glithero R.J."/>
            <person name="Grafham D.V."/>
            <person name="Griffiths C."/>
            <person name="Griffiths-Jones S."/>
            <person name="Grocock R."/>
            <person name="Hammond S."/>
            <person name="Harrison E.S.I."/>
            <person name="Hart E."/>
            <person name="Haugen E."/>
            <person name="Heath P.D."/>
            <person name="Holmes S."/>
            <person name="Holt K."/>
            <person name="Howden P.J."/>
            <person name="Hunt A.R."/>
            <person name="Hunt S.E."/>
            <person name="Hunter G."/>
            <person name="Isherwood J."/>
            <person name="James R."/>
            <person name="Johnson C."/>
            <person name="Johnson D."/>
            <person name="Joy A."/>
            <person name="Kay M."/>
            <person name="Kershaw J.K."/>
            <person name="Kibukawa M."/>
            <person name="Kimberley A.M."/>
            <person name="King A."/>
            <person name="Knights A.J."/>
            <person name="Lad H."/>
            <person name="Laird G."/>
            <person name="Lawlor S."/>
            <person name="Leongamornlert D.A."/>
            <person name="Lloyd D.M."/>
            <person name="Loveland J."/>
            <person name="Lovell J."/>
            <person name="Lush M.J."/>
            <person name="Lyne R."/>
            <person name="Martin S."/>
            <person name="Mashreghi-Mohammadi M."/>
            <person name="Matthews L."/>
            <person name="Matthews N.S.W."/>
            <person name="McLaren S."/>
            <person name="Milne S."/>
            <person name="Mistry S."/>
            <person name="Moore M.J.F."/>
            <person name="Nickerson T."/>
            <person name="O'Dell C.N."/>
            <person name="Oliver K."/>
            <person name="Palmeiri A."/>
            <person name="Palmer S.A."/>
            <person name="Parker A."/>
            <person name="Patel D."/>
            <person name="Pearce A.V."/>
            <person name="Peck A.I."/>
            <person name="Pelan S."/>
            <person name="Phelps K."/>
            <person name="Phillimore B.J."/>
            <person name="Plumb R."/>
            <person name="Rajan J."/>
            <person name="Raymond C."/>
            <person name="Rouse G."/>
            <person name="Saenphimmachak C."/>
            <person name="Sehra H.K."/>
            <person name="Sheridan E."/>
            <person name="Shownkeen R."/>
            <person name="Sims S."/>
            <person name="Skuce C.D."/>
            <person name="Smith M."/>
            <person name="Steward C."/>
            <person name="Subramanian S."/>
            <person name="Sycamore N."/>
            <person name="Tracey A."/>
            <person name="Tromans A."/>
            <person name="Van Helmond Z."/>
            <person name="Wall M."/>
            <person name="Wallis J.M."/>
            <person name="White S."/>
            <person name="Whitehead S.L."/>
            <person name="Wilkinson J.E."/>
            <person name="Willey D.L."/>
            <person name="Williams H."/>
            <person name="Wilming L."/>
            <person name="Wray P.W."/>
            <person name="Wu Z."/>
            <person name="Coulson A."/>
            <person name="Vaudin M."/>
            <person name="Sulston J.E."/>
            <person name="Durbin R.M."/>
            <person name="Hubbard T."/>
            <person name="Wooster R."/>
            <person name="Dunham I."/>
            <person name="Carter N.P."/>
            <person name="McVean G."/>
            <person name="Ross M.T."/>
            <person name="Harrow J."/>
            <person name="Olson M.V."/>
            <person name="Beck S."/>
            <person name="Rogers J."/>
            <person name="Bentley D.R."/>
        </authorList>
    </citation>
    <scope>NUCLEOTIDE SEQUENCE [LARGE SCALE GENOMIC DNA]</scope>
</reference>
<reference key="3">
    <citation type="journal article" date="2004" name="Genome Res.">
        <title>The status, quality, and expansion of the NIH full-length cDNA project: the Mammalian Gene Collection (MGC).</title>
        <authorList>
            <consortium name="The MGC Project Team"/>
        </authorList>
    </citation>
    <scope>NUCLEOTIDE SEQUENCE [LARGE SCALE MRNA]</scope>
</reference>
<reference key="4">
    <citation type="journal article" date="2004" name="Proc. Natl. Acad. Sci. U.S.A.">
        <title>The human olfactory receptor gene family.</title>
        <authorList>
            <person name="Malnic B."/>
            <person name="Godfrey P.A."/>
            <person name="Buck L.B."/>
        </authorList>
    </citation>
    <scope>IDENTIFICATION</scope>
</reference>
<reference key="5">
    <citation type="journal article" date="2004" name="Proc. Natl. Acad. Sci. U.S.A.">
        <authorList>
            <person name="Malnic B."/>
            <person name="Godfrey P.A."/>
            <person name="Buck L.B."/>
        </authorList>
    </citation>
    <scope>ERRATUM OF PUBMED:14983052</scope>
</reference>
<name>OR6K6_HUMAN</name>
<comment type="function">
    <text evidence="3">Odorant receptor.</text>
</comment>
<comment type="subcellular location">
    <subcellularLocation>
        <location>Cell membrane</location>
        <topology>Multi-pass membrane protein</topology>
    </subcellularLocation>
</comment>
<comment type="similarity">
    <text evidence="2">Belongs to the G-protein coupled receptor 1 family.</text>
</comment>
<comment type="caution">
    <text evidence="3">It is uncertain whether Met-1 or Met-25 is the initiator.</text>
</comment>
<comment type="sequence caution" evidence="3">
    <conflict type="erroneous initiation">
        <sequence resource="EMBL-CDS" id="BAC05876"/>
    </conflict>
</comment>
<comment type="online information" name="Human Olfactory Receptor Data Exploratorium (HORDE)">
    <link uri="http://genome.weizmann.ac.il/horde/card/index/symbol:OR6K6"/>
</comment>
<sequence length="343" mass="38362">MKQYSVGNQHSNYRSLLFPFLCSQMTQLTASGNQTMVTEFLFSMFPHAHRGGLLFFIPLLLIYGFILTGNLIMFIVIQVGMALHTPLYFFISVLSFLEICYTTTTIPKMLSCLISEQKSISVAGCLLQMYFFHSLGITESCVLTAMAIDRYIAICNPLRYPTIMIPKLCIQLTVGSCFCGFLLVLPEIAWISTLPFCGSNQIHQIFCDFTPVLSLACTDTFLVVIVDAIHAAEIVASFLVIALSYIRIIIVILGMHSAEGHHKAFSTCAAHLAVFLLFFGSVAVMYLRFSATYSVFWDTAIAVTFVILAPFFNPIIYSLKNKDMKEAIGRLFHYQKRAGWAGK</sequence>
<evidence type="ECO:0000255" key="1"/>
<evidence type="ECO:0000255" key="2">
    <source>
        <dbReference type="PROSITE-ProRule" id="PRU00521"/>
    </source>
</evidence>
<evidence type="ECO:0000305" key="3"/>
<accession>Q8NGW6</accession>
<accession>B9EIM8</accession>
<accession>Q5VUU9</accession>
<accession>Q6IFR4</accession>
<gene>
    <name type="primary">OR6K6</name>
</gene>
<organism>
    <name type="scientific">Homo sapiens</name>
    <name type="common">Human</name>
    <dbReference type="NCBI Taxonomy" id="9606"/>
    <lineage>
        <taxon>Eukaryota</taxon>
        <taxon>Metazoa</taxon>
        <taxon>Chordata</taxon>
        <taxon>Craniata</taxon>
        <taxon>Vertebrata</taxon>
        <taxon>Euteleostomi</taxon>
        <taxon>Mammalia</taxon>
        <taxon>Eutheria</taxon>
        <taxon>Euarchontoglires</taxon>
        <taxon>Primates</taxon>
        <taxon>Haplorrhini</taxon>
        <taxon>Catarrhini</taxon>
        <taxon>Hominidae</taxon>
        <taxon>Homo</taxon>
    </lineage>
</organism>